<evidence type="ECO:0000250" key="1"/>
<evidence type="ECO:0000250" key="2">
    <source>
        <dbReference type="UniProtKB" id="O60941"/>
    </source>
</evidence>
<evidence type="ECO:0000250" key="3">
    <source>
        <dbReference type="UniProtKB" id="O70585"/>
    </source>
</evidence>
<evidence type="ECO:0000255" key="4"/>
<evidence type="ECO:0000255" key="5">
    <source>
        <dbReference type="PROSITE-ProRule" id="PRU00228"/>
    </source>
</evidence>
<evidence type="ECO:0000256" key="6">
    <source>
        <dbReference type="SAM" id="MobiDB-lite"/>
    </source>
</evidence>
<evidence type="ECO:0000269" key="7">
    <source>
    </source>
</evidence>
<evidence type="ECO:0000269" key="8">
    <source>
    </source>
</evidence>
<evidence type="ECO:0000269" key="9">
    <source>
    </source>
</evidence>
<evidence type="ECO:0000269" key="10">
    <source>
    </source>
</evidence>
<evidence type="ECO:0000305" key="11"/>
<evidence type="ECO:0000312" key="12">
    <source>
        <dbReference type="RGD" id="1309579"/>
    </source>
</evidence>
<proteinExistence type="evidence at protein level"/>
<reference key="1">
    <citation type="journal article" date="2004" name="Genome Res.">
        <title>The status, quality, and expansion of the NIH full-length cDNA project: the Mammalian Gene Collection (MGC).</title>
        <authorList>
            <consortium name="The MGC Project Team"/>
        </authorList>
    </citation>
    <scope>NUCLEOTIDE SEQUENCE [LARGE SCALE MRNA]</scope>
    <source>
        <tissue>Kidney</tissue>
    </source>
</reference>
<reference evidence="11" key="2">
    <citation type="journal article" date="1996" name="Genome Res.">
        <title>Normalization and subtraction: two approaches to facilitate gene discovery.</title>
        <authorList>
            <person name="Bonaldo M.F."/>
            <person name="Lennon G."/>
            <person name="Soares M.B."/>
        </authorList>
    </citation>
    <scope>NUCLEOTIDE SEQUENCE [LARGE SCALE MRNA] OF 350-451</scope>
    <source>
        <strain evidence="10">Sprague-Dawley</strain>
        <tissue evidence="10">Embryo</tissue>
    </source>
</reference>
<reference key="3">
    <citation type="journal article" date="1999" name="J. Cell Biol.">
        <title>Different dystrophin-like complexes are expressed in neurons and glia.</title>
        <authorList>
            <person name="Blake D.J."/>
            <person name="Hawkes R."/>
            <person name="Benson M.A."/>
            <person name="Beesley P.W."/>
        </authorList>
    </citation>
    <scope>TISSUE SPECIFICITY</scope>
    <scope>SUBCELLULAR LOCATION</scope>
    <scope>INTERACTION WITH DMD AND UTRN</scope>
</reference>
<reference key="4">
    <citation type="journal article" date="2003" name="J. Cell Sci.">
        <title>Beta-dystrobrevin interacts directly with kinesin heavy chain in brain.</title>
        <authorList>
            <person name="Macioce P."/>
            <person name="Gambara G."/>
            <person name="Bernassola M."/>
            <person name="Gaddini L."/>
            <person name="Torreri P."/>
            <person name="Macchia G."/>
            <person name="Ramoni C."/>
            <person name="Ceccarini M."/>
            <person name="Petrucci T.C."/>
        </authorList>
    </citation>
    <scope>INTERACTION WITH KIF5A</scope>
</reference>
<reference key="5">
    <citation type="journal article" date="2007" name="J. Neurosci. Res.">
        <title>beta-dystrobrevin, a kinesin-binding receptor, interacts with the extracellular matrix components pancortins.</title>
        <authorList>
            <person name="Veroni C."/>
            <person name="Grasso M."/>
            <person name="Macchia G."/>
            <person name="Ramoni C."/>
            <person name="Ceccarini M."/>
            <person name="Petrucci T.C."/>
            <person name="Macioce P."/>
        </authorList>
    </citation>
    <scope>INTERACTION WITH OLFM1</scope>
</reference>
<reference key="6">
    <citation type="journal article" date="2012" name="Nat. Commun.">
        <title>Quantitative maps of protein phosphorylation sites across 14 different rat organs and tissues.</title>
        <authorList>
            <person name="Lundby A."/>
            <person name="Secher A."/>
            <person name="Lage K."/>
            <person name="Nordsborg N.B."/>
            <person name="Dmytriyev A."/>
            <person name="Lundby C."/>
            <person name="Olsen J.V."/>
        </authorList>
    </citation>
    <scope>IDENTIFICATION BY MASS SPECTROMETRY [LARGE SCALE ANALYSIS]</scope>
</reference>
<protein>
    <recommendedName>
        <fullName evidence="11">Dystrobrevin beta</fullName>
        <shortName evidence="2">DTN-B</shortName>
    </recommendedName>
    <alternativeName>
        <fullName evidence="2">Beta-dystrobrevin</fullName>
    </alternativeName>
</protein>
<feature type="chain" id="PRO_0000086880" description="Dystrobrevin beta">
    <location>
        <begin position="1"/>
        <end position="654"/>
    </location>
</feature>
<feature type="zinc finger region" description="ZZ-type" evidence="5">
    <location>
        <begin position="238"/>
        <end position="294"/>
    </location>
</feature>
<feature type="region of interest" description="Syntrophin-binding region" evidence="1">
    <location>
        <begin position="399"/>
        <end position="448"/>
    </location>
</feature>
<feature type="region of interest" description="Disordered" evidence="6">
    <location>
        <begin position="520"/>
        <end position="562"/>
    </location>
</feature>
<feature type="coiled-coil region" evidence="4">
    <location>
        <begin position="429"/>
        <end position="519"/>
    </location>
</feature>
<feature type="compositionally biased region" description="Polar residues" evidence="6">
    <location>
        <begin position="521"/>
        <end position="530"/>
    </location>
</feature>
<feature type="compositionally biased region" description="Polar residues" evidence="6">
    <location>
        <begin position="542"/>
        <end position="558"/>
    </location>
</feature>
<feature type="binding site" evidence="5">
    <location>
        <position position="243"/>
    </location>
    <ligand>
        <name>Zn(2+)</name>
        <dbReference type="ChEBI" id="CHEBI:29105"/>
        <label>1</label>
    </ligand>
</feature>
<feature type="binding site" evidence="5">
    <location>
        <position position="246"/>
    </location>
    <ligand>
        <name>Zn(2+)</name>
        <dbReference type="ChEBI" id="CHEBI:29105"/>
        <label>1</label>
    </ligand>
</feature>
<feature type="binding site" evidence="5">
    <location>
        <position position="258"/>
    </location>
    <ligand>
        <name>Zn(2+)</name>
        <dbReference type="ChEBI" id="CHEBI:29105"/>
        <label>2</label>
    </ligand>
</feature>
<feature type="binding site" evidence="5">
    <location>
        <position position="261"/>
    </location>
    <ligand>
        <name>Zn(2+)</name>
        <dbReference type="ChEBI" id="CHEBI:29105"/>
        <label>2</label>
    </ligand>
</feature>
<feature type="binding site" evidence="5">
    <location>
        <position position="267"/>
    </location>
    <ligand>
        <name>Zn(2+)</name>
        <dbReference type="ChEBI" id="CHEBI:29105"/>
        <label>1</label>
    </ligand>
</feature>
<feature type="binding site" evidence="5">
    <location>
        <position position="270"/>
    </location>
    <ligand>
        <name>Zn(2+)</name>
        <dbReference type="ChEBI" id="CHEBI:29105"/>
        <label>1</label>
    </ligand>
</feature>
<feature type="binding site" evidence="5">
    <location>
        <position position="280"/>
    </location>
    <ligand>
        <name>Zn(2+)</name>
        <dbReference type="ChEBI" id="CHEBI:29105"/>
        <label>2</label>
    </ligand>
</feature>
<feature type="binding site" evidence="5">
    <location>
        <position position="284"/>
    </location>
    <ligand>
        <name>Zn(2+)</name>
        <dbReference type="ChEBI" id="CHEBI:29105"/>
        <label>2</label>
    </ligand>
</feature>
<feature type="modified residue" description="N-acetylmethionine" evidence="2">
    <location>
        <position position="1"/>
    </location>
</feature>
<feature type="modified residue" description="Phosphothreonine" evidence="3">
    <location>
        <position position="11"/>
    </location>
</feature>
<feature type="modified residue" description="Phosphothreonine" evidence="3">
    <location>
        <position position="69"/>
    </location>
</feature>
<feature type="modified residue" description="Phosphothreonine" evidence="3">
    <location>
        <position position="179"/>
    </location>
</feature>
<feature type="modified residue" description="Phosphothreonine" evidence="3">
    <location>
        <position position="212"/>
    </location>
</feature>
<feature type="modified residue" description="Phosphoserine" evidence="2">
    <location>
        <position position="394"/>
    </location>
</feature>
<feature type="modified residue" description="Phosphothreonine" evidence="3">
    <location>
        <position position="424"/>
    </location>
</feature>
<gene>
    <name evidence="12" type="primary">Dtnb</name>
</gene>
<comment type="function">
    <text evidence="3">Scaffolding protein that assembles DMD and SNTA1 molecules to the basal membrane of kidney cells and liver sinusoids. May function as a repressor of the SYN1 promoter through the binding of repressor element-1 (RE-1), in turn regulates SYN1 expression and may be involved in cell proliferation regulation during the early phase of neural differentiation. May be required for proper maturation and function of a subset of inhibitory synapses.</text>
</comment>
<comment type="subunit">
    <text evidence="2 3 7 8 9">Interacts with dystrophin short form DP71 and syntrophins SNTG1 and SNTG2 (By similarity). Binds DTNBP1 (By similarity). Forms a specific complex composed of DMD, SNTB2 and SNTA1 in neuron; the interaction with SNTB2 and SNTA1 is DMD independent (PubMed:10545507). Interacts with UTRN and dystrophin short form DP71 in the kidney and liver (PubMed:10545507). Interacts with SNTB1, SNTB2 and SNTA1 in kidney and liver. Interacts with KIF5A (PubMed:14600269). Interacts with HMG20A and HMG20B (By similarity). Interacts with OLFM1 (PubMed:17265465). Interacts with PRKAR2B and PRKAR1A (By similarity).</text>
</comment>
<comment type="subcellular location">
    <subcellularLocation>
        <location evidence="3">Cytoplasm</location>
    </subcellularLocation>
    <subcellularLocation>
        <location evidence="7">Postsynaptic density</location>
    </subcellularLocation>
    <subcellularLocation>
        <location evidence="3">Cell projection</location>
        <location evidence="3">Dendrite</location>
    </subcellularLocation>
    <subcellularLocation>
        <location evidence="3">Basal cell membrane</location>
    </subcellularLocation>
    <subcellularLocation>
        <location evidence="3">Postsynapse</location>
    </subcellularLocation>
    <subcellularLocation>
        <location evidence="3">Nucleus</location>
    </subcellularLocation>
    <text evidence="3">Localized at inhibitory synapses on the dendrites of cerebellar Purkinje cells.</text>
</comment>
<comment type="tissue specificity">
    <text evidence="7">Expressed in neurons. In the isocortex, expressed most prominently in the somata (including the nuclei) and the dendrites of the pyramidal cells. Expressed in the hippocampus CA1, CA2, and CA3 neurons, namely in the initial segments of dendrites. Expressed in the Purkinje cells, molecular layer interneurons, and granule cells of cerebellum. Expressed in axon fascicles associated with the spinal trigeminal tract and in the internal capsule in the brainstem.</text>
</comment>
<comment type="domain">
    <text evidence="1">The coiled coil domain may mediate the interaction with dystrophin.</text>
</comment>
<comment type="PTM">
    <text evidence="3">Phosphorylated by PKA. Phosphorylation at Thr-11 alters the interaction with KIF5A.</text>
</comment>
<comment type="similarity">
    <text evidence="3">Belongs to the dystrophin family. Dystrobrevin subfamily.</text>
</comment>
<name>DTNB_RAT</name>
<accession>P84060</accession>
<accession>Q66HF4</accession>
<keyword id="KW-0007">Acetylation</keyword>
<keyword id="KW-1003">Cell membrane</keyword>
<keyword id="KW-0966">Cell projection</keyword>
<keyword id="KW-0175">Coiled coil</keyword>
<keyword id="KW-0963">Cytoplasm</keyword>
<keyword id="KW-0472">Membrane</keyword>
<keyword id="KW-0479">Metal-binding</keyword>
<keyword id="KW-0539">Nucleus</keyword>
<keyword id="KW-0597">Phosphoprotein</keyword>
<keyword id="KW-1185">Reference proteome</keyword>
<keyword id="KW-0770">Synapse</keyword>
<keyword id="KW-0862">Zinc</keyword>
<keyword id="KW-0863">Zinc-finger</keyword>
<sequence length="654" mass="73878">MIEEGGNKRKTMAEKRQLFIEMRAQNFDVIRLSTYRTACKLRFVQKRCNLHLVDIWNMIEAFRDNGLNTLDHATEISVSRLETVISSIYYQLNKRLPSTHQINVEQSISLLLNFMIAAYDSEGRGKLTVFSVKAMLATMCGGKMLDKLRYIFSQMSDSNGLMMFGKLDQFLKEALKLPTAVFEGPSFGYTEHAVRTCFPQQKKIMLNMFLDTMMADPPPQCLVWLPLMHRLAHVENVFHPVECSYCHCESMMGFRYRCQQCHNYQLCQNCFWRGHAGGPHSNQHQMKELSSWKSPAKKLSHAISKSLGCVPSREPPHPVFPEQPEKPLDLAHIVPPRPLTNMNDTMVSHMSSGVPTPTKRLQYGQDMPNLLADEHALIASYVARLQHCTRVLDSPSRLDEEHRLIARYAARLAAEAGNMTRPPTDASFNFDANKQQRQLIAELENKNREILQEIQRLRLEHEQASQPTPEKAQQNPTLLAELRLLRQRKDELEQRMSALQESRRELMVQLEGLMKLLKAQATGSPHTSPTHGGGRSMPMPVRSTSAGSTPTHGPQDSLSGVGGDVQEAFAQGTRRNLRNDLLVAADSITNTMSSLVKELHSGETQRFPLVSSSPSCPLPCPTIPTHSPSFHATFPSRNTRDLHPVPPSHMVSLY</sequence>
<dbReference type="EMBL" id="BC081889">
    <property type="protein sequence ID" value="AAH81889.1"/>
    <property type="molecule type" value="mRNA"/>
</dbReference>
<dbReference type="EMBL" id="AA899479">
    <property type="status" value="NOT_ANNOTATED_CDS"/>
    <property type="molecule type" value="mRNA"/>
</dbReference>
<dbReference type="RefSeq" id="NP_001012191.1">
    <property type="nucleotide sequence ID" value="NM_001012191.1"/>
</dbReference>
<dbReference type="RefSeq" id="XP_038968415.1">
    <property type="nucleotide sequence ID" value="XM_039112487.2"/>
</dbReference>
<dbReference type="SMR" id="P84060"/>
<dbReference type="BioGRID" id="263662">
    <property type="interactions" value="5"/>
</dbReference>
<dbReference type="CORUM" id="P84060"/>
<dbReference type="FunCoup" id="P84060">
    <property type="interactions" value="2580"/>
</dbReference>
<dbReference type="IntAct" id="P84060">
    <property type="interactions" value="1"/>
</dbReference>
<dbReference type="STRING" id="10116.ENSRNOP00000057536"/>
<dbReference type="GlyGen" id="P84060">
    <property type="glycosylation" value="1 site"/>
</dbReference>
<dbReference type="iPTMnet" id="P84060"/>
<dbReference type="PhosphoSitePlus" id="P84060"/>
<dbReference type="SwissPalm" id="P84060"/>
<dbReference type="PaxDb" id="10116-ENSRNOP00000057536"/>
<dbReference type="GeneID" id="362715"/>
<dbReference type="AGR" id="RGD:1309579"/>
<dbReference type="RGD" id="1309579">
    <property type="gene designation" value="Dtnb"/>
</dbReference>
<dbReference type="VEuPathDB" id="HostDB:ENSRNOG00000011914"/>
<dbReference type="eggNOG" id="KOG4301">
    <property type="taxonomic scope" value="Eukaryota"/>
</dbReference>
<dbReference type="InParanoid" id="P84060"/>
<dbReference type="PhylomeDB" id="P84060"/>
<dbReference type="Reactome" id="R-RNO-9913351">
    <property type="pathway name" value="Formation of the dystrophin-glycoprotein complex (DGC)"/>
</dbReference>
<dbReference type="PRO" id="PR:P84060"/>
<dbReference type="Proteomes" id="UP000002494">
    <property type="component" value="Chromosome 6"/>
</dbReference>
<dbReference type="Bgee" id="ENSRNOG00000011914">
    <property type="expression patterns" value="Expressed in pancreas and 19 other cell types or tissues"/>
</dbReference>
<dbReference type="ExpressionAtlas" id="P84060">
    <property type="expression patterns" value="baseline and differential"/>
</dbReference>
<dbReference type="GO" id="GO:0009925">
    <property type="term" value="C:basal plasma membrane"/>
    <property type="evidence" value="ECO:0007669"/>
    <property type="project" value="UniProtKB-SubCell"/>
</dbReference>
<dbReference type="GO" id="GO:0005737">
    <property type="term" value="C:cytoplasm"/>
    <property type="evidence" value="ECO:0000250"/>
    <property type="project" value="UniProtKB"/>
</dbReference>
<dbReference type="GO" id="GO:0030425">
    <property type="term" value="C:dendrite"/>
    <property type="evidence" value="ECO:0007669"/>
    <property type="project" value="UniProtKB-SubCell"/>
</dbReference>
<dbReference type="GO" id="GO:0098982">
    <property type="term" value="C:GABA-ergic synapse"/>
    <property type="evidence" value="ECO:0000266"/>
    <property type="project" value="RGD"/>
</dbReference>
<dbReference type="GO" id="GO:0060077">
    <property type="term" value="C:inhibitory synapse"/>
    <property type="evidence" value="ECO:0000250"/>
    <property type="project" value="UniProtKB"/>
</dbReference>
<dbReference type="GO" id="GO:0005634">
    <property type="term" value="C:nucleus"/>
    <property type="evidence" value="ECO:0000250"/>
    <property type="project" value="UniProtKB"/>
</dbReference>
<dbReference type="GO" id="GO:0005886">
    <property type="term" value="C:plasma membrane"/>
    <property type="evidence" value="ECO:0000318"/>
    <property type="project" value="GO_Central"/>
</dbReference>
<dbReference type="GO" id="GO:0098794">
    <property type="term" value="C:postsynapse"/>
    <property type="evidence" value="ECO:0000266"/>
    <property type="project" value="RGD"/>
</dbReference>
<dbReference type="GO" id="GO:0014069">
    <property type="term" value="C:postsynaptic density"/>
    <property type="evidence" value="ECO:0000314"/>
    <property type="project" value="UniProtKB"/>
</dbReference>
<dbReference type="GO" id="GO:0045202">
    <property type="term" value="C:synapse"/>
    <property type="evidence" value="ECO:0000266"/>
    <property type="project" value="RGD"/>
</dbReference>
<dbReference type="GO" id="GO:0003677">
    <property type="term" value="F:DNA binding"/>
    <property type="evidence" value="ECO:0000266"/>
    <property type="project" value="RGD"/>
</dbReference>
<dbReference type="GO" id="GO:0019902">
    <property type="term" value="F:phosphatase binding"/>
    <property type="evidence" value="ECO:0000314"/>
    <property type="project" value="UniProtKB"/>
</dbReference>
<dbReference type="GO" id="GO:0008270">
    <property type="term" value="F:zinc ion binding"/>
    <property type="evidence" value="ECO:0007669"/>
    <property type="project" value="UniProtKB-KW"/>
</dbReference>
<dbReference type="GO" id="GO:0030182">
    <property type="term" value="P:neuron differentiation"/>
    <property type="evidence" value="ECO:0000266"/>
    <property type="project" value="RGD"/>
</dbReference>
<dbReference type="GO" id="GO:0099536">
    <property type="term" value="P:synaptic signaling"/>
    <property type="evidence" value="ECO:0000318"/>
    <property type="project" value="GO_Central"/>
</dbReference>
<dbReference type="CDD" id="cd16244">
    <property type="entry name" value="EFh_DTN"/>
    <property type="match status" value="1"/>
</dbReference>
<dbReference type="CDD" id="cd02334">
    <property type="entry name" value="ZZ_dystrophin"/>
    <property type="match status" value="1"/>
</dbReference>
<dbReference type="FunFam" id="1.10.238.10:FF:000014">
    <property type="entry name" value="Dystrobrevin alpha"/>
    <property type="match status" value="1"/>
</dbReference>
<dbReference type="FunFam" id="1.10.238.10:FF:000016">
    <property type="entry name" value="Dystrobrevin alpha"/>
    <property type="match status" value="1"/>
</dbReference>
<dbReference type="FunFam" id="3.30.60.90:FF:000002">
    <property type="entry name" value="Dystrobrevin alpha"/>
    <property type="match status" value="1"/>
</dbReference>
<dbReference type="Gene3D" id="3.30.60.90">
    <property type="match status" value="1"/>
</dbReference>
<dbReference type="Gene3D" id="1.10.238.10">
    <property type="entry name" value="EF-hand"/>
    <property type="match status" value="2"/>
</dbReference>
<dbReference type="InterPro" id="IPR017432">
    <property type="entry name" value="Distrobrevin"/>
</dbReference>
<dbReference type="InterPro" id="IPR011992">
    <property type="entry name" value="EF-hand-dom_pair"/>
</dbReference>
<dbReference type="InterPro" id="IPR015153">
    <property type="entry name" value="EF-hand_dom_typ1"/>
</dbReference>
<dbReference type="InterPro" id="IPR015154">
    <property type="entry name" value="EF-hand_dom_typ2"/>
</dbReference>
<dbReference type="InterPro" id="IPR050774">
    <property type="entry name" value="KCMF1/Dystrophin"/>
</dbReference>
<dbReference type="InterPro" id="IPR000433">
    <property type="entry name" value="Znf_ZZ"/>
</dbReference>
<dbReference type="InterPro" id="IPR043145">
    <property type="entry name" value="Znf_ZZ_sf"/>
</dbReference>
<dbReference type="PANTHER" id="PTHR12268:SF22">
    <property type="entry name" value="DYSTROBREVIN BETA"/>
    <property type="match status" value="1"/>
</dbReference>
<dbReference type="PANTHER" id="PTHR12268">
    <property type="entry name" value="E3 UBIQUITIN-PROTEIN LIGASE KCMF1"/>
    <property type="match status" value="1"/>
</dbReference>
<dbReference type="Pfam" id="PF09068">
    <property type="entry name" value="EF-hand_2"/>
    <property type="match status" value="1"/>
</dbReference>
<dbReference type="Pfam" id="PF09069">
    <property type="entry name" value="EF-hand_3"/>
    <property type="match status" value="1"/>
</dbReference>
<dbReference type="Pfam" id="PF00569">
    <property type="entry name" value="ZZ"/>
    <property type="match status" value="1"/>
</dbReference>
<dbReference type="PIRSF" id="PIRSF038204">
    <property type="entry name" value="Distrobrevin"/>
    <property type="match status" value="1"/>
</dbReference>
<dbReference type="SMART" id="SM00291">
    <property type="entry name" value="ZnF_ZZ"/>
    <property type="match status" value="1"/>
</dbReference>
<dbReference type="SUPFAM" id="SSF47473">
    <property type="entry name" value="EF-hand"/>
    <property type="match status" value="2"/>
</dbReference>
<dbReference type="SUPFAM" id="SSF57850">
    <property type="entry name" value="RING/U-box"/>
    <property type="match status" value="1"/>
</dbReference>
<dbReference type="PROSITE" id="PS01357">
    <property type="entry name" value="ZF_ZZ_1"/>
    <property type="match status" value="1"/>
</dbReference>
<dbReference type="PROSITE" id="PS50135">
    <property type="entry name" value="ZF_ZZ_2"/>
    <property type="match status" value="1"/>
</dbReference>
<organism>
    <name type="scientific">Rattus norvegicus</name>
    <name type="common">Rat</name>
    <dbReference type="NCBI Taxonomy" id="10116"/>
    <lineage>
        <taxon>Eukaryota</taxon>
        <taxon>Metazoa</taxon>
        <taxon>Chordata</taxon>
        <taxon>Craniata</taxon>
        <taxon>Vertebrata</taxon>
        <taxon>Euteleostomi</taxon>
        <taxon>Mammalia</taxon>
        <taxon>Eutheria</taxon>
        <taxon>Euarchontoglires</taxon>
        <taxon>Glires</taxon>
        <taxon>Rodentia</taxon>
        <taxon>Myomorpha</taxon>
        <taxon>Muroidea</taxon>
        <taxon>Muridae</taxon>
        <taxon>Murinae</taxon>
        <taxon>Rattus</taxon>
    </lineage>
</organism>